<sequence length="61" mass="6838">LECHNQQSSQPPTTKSCPGDTNCYNKRWRDHRGTIIERGCGCPTVKPGINLKCCTTDRCNN</sequence>
<organism>
    <name type="scientific">Hemachatus haemachatus</name>
    <name type="common">Rinkhals</name>
    <name type="synonym">Sepedon haemachatus</name>
    <dbReference type="NCBI Taxonomy" id="8626"/>
    <lineage>
        <taxon>Eukaryota</taxon>
        <taxon>Metazoa</taxon>
        <taxon>Chordata</taxon>
        <taxon>Craniata</taxon>
        <taxon>Vertebrata</taxon>
        <taxon>Euteleostomi</taxon>
        <taxon>Lepidosauria</taxon>
        <taxon>Squamata</taxon>
        <taxon>Bifurcata</taxon>
        <taxon>Unidentata</taxon>
        <taxon>Episquamata</taxon>
        <taxon>Toxicofera</taxon>
        <taxon>Serpentes</taxon>
        <taxon>Colubroidea</taxon>
        <taxon>Elapidae</taxon>
        <taxon>Elapinae</taxon>
        <taxon>Hemachatus</taxon>
    </lineage>
</organism>
<feature type="chain" id="PRO_0000093582" description="Short neurotoxin 1" evidence="4">
    <location>
        <begin position="1"/>
        <end position="61"/>
    </location>
</feature>
<feature type="region of interest" description="Disordered" evidence="3">
    <location>
        <begin position="1"/>
        <end position="20"/>
    </location>
</feature>
<feature type="compositionally biased region" description="Polar residues" evidence="3">
    <location>
        <begin position="1"/>
        <end position="16"/>
    </location>
</feature>
<feature type="disulfide bond" evidence="1">
    <location>
        <begin position="3"/>
        <end position="23"/>
    </location>
</feature>
<feature type="disulfide bond" evidence="1">
    <location>
        <begin position="17"/>
        <end position="40"/>
    </location>
</feature>
<feature type="disulfide bond" evidence="1">
    <location>
        <begin position="42"/>
        <end position="53"/>
    </location>
</feature>
<feature type="disulfide bond" evidence="1">
    <location>
        <begin position="54"/>
        <end position="59"/>
    </location>
</feature>
<proteinExistence type="evidence at protein level"/>
<accession>P01425</accession>
<evidence type="ECO:0000250" key="1">
    <source>
        <dbReference type="UniProtKB" id="P0C1Z0"/>
    </source>
</evidence>
<evidence type="ECO:0000250" key="2">
    <source>
        <dbReference type="UniProtKB" id="P60775"/>
    </source>
</evidence>
<evidence type="ECO:0000256" key="3">
    <source>
        <dbReference type="SAM" id="MobiDB-lite"/>
    </source>
</evidence>
<evidence type="ECO:0000269" key="4">
    <source>
    </source>
</evidence>
<evidence type="ECO:0000305" key="5"/>
<keyword id="KW-0008">Acetylcholine receptor inhibiting toxin</keyword>
<keyword id="KW-0903">Direct protein sequencing</keyword>
<keyword id="KW-1015">Disulfide bond</keyword>
<keyword id="KW-0872">Ion channel impairing toxin</keyword>
<keyword id="KW-0528">Neurotoxin</keyword>
<keyword id="KW-0629">Postsynaptic neurotoxin</keyword>
<keyword id="KW-0964">Secreted</keyword>
<keyword id="KW-0800">Toxin</keyword>
<comment type="function">
    <text evidence="2">Binds to muscle nicotinic acetylcholine receptor (nAChR) and inhibit acetylcholine from binding to the receptor, thereby impairing neuromuscular transmission.</text>
</comment>
<comment type="subcellular location">
    <subcellularLocation>
        <location evidence="4">Secreted</location>
    </subcellularLocation>
</comment>
<comment type="tissue specificity">
    <text evidence="5">Expressed by the venom gland.</text>
</comment>
<comment type="toxic dose">
    <text evidence="4">LD(50) is 0.11 mg/kg by intravenous injection.</text>
</comment>
<comment type="similarity">
    <text evidence="5">Belongs to the three-finger toxin family. Short-chain subfamily. Type I alpha-neurotoxin sub-subfamily.</text>
</comment>
<name>3S11_HEMHA</name>
<protein>
    <recommendedName>
        <fullName>Short neurotoxin 1</fullName>
    </recommendedName>
    <alternativeName>
        <fullName>Toxin II</fullName>
    </alternativeName>
</protein>
<reference key="1">
    <citation type="journal article" date="1971" name="J. Biol. Chem.">
        <title>Snake venom toxins. Purification, properties, and complete amino acid sequence of two toxins from Ringhals (Hemachatus haemachatus) venom.</title>
        <authorList>
            <person name="Strydom A.J.C."/>
            <person name="Botes D.P."/>
        </authorList>
    </citation>
    <scope>PROTEIN SEQUENCE</scope>
    <scope>TOXIC DOSE</scope>
    <scope>SUBCELLULAR LOCATION</scope>
    <source>
        <tissue>Venom</tissue>
    </source>
</reference>
<dbReference type="PIR" id="A01694">
    <property type="entry name" value="N1RI1"/>
</dbReference>
<dbReference type="SMR" id="P01425"/>
<dbReference type="GO" id="GO:0005576">
    <property type="term" value="C:extracellular region"/>
    <property type="evidence" value="ECO:0007669"/>
    <property type="project" value="UniProtKB-SubCell"/>
</dbReference>
<dbReference type="GO" id="GO:0030550">
    <property type="term" value="F:acetylcholine receptor inhibitor activity"/>
    <property type="evidence" value="ECO:0007669"/>
    <property type="project" value="UniProtKB-KW"/>
</dbReference>
<dbReference type="GO" id="GO:0099106">
    <property type="term" value="F:ion channel regulator activity"/>
    <property type="evidence" value="ECO:0007669"/>
    <property type="project" value="UniProtKB-KW"/>
</dbReference>
<dbReference type="GO" id="GO:0090729">
    <property type="term" value="F:toxin activity"/>
    <property type="evidence" value="ECO:0007669"/>
    <property type="project" value="UniProtKB-KW"/>
</dbReference>
<dbReference type="CDD" id="cd00206">
    <property type="entry name" value="TFP_snake_toxin"/>
    <property type="match status" value="1"/>
</dbReference>
<dbReference type="FunFam" id="2.10.60.10:FF:000024">
    <property type="entry name" value="Cytotoxin 1"/>
    <property type="match status" value="1"/>
</dbReference>
<dbReference type="Gene3D" id="2.10.60.10">
    <property type="entry name" value="CD59"/>
    <property type="match status" value="1"/>
</dbReference>
<dbReference type="InterPro" id="IPR003571">
    <property type="entry name" value="Snake_3FTx"/>
</dbReference>
<dbReference type="InterPro" id="IPR045860">
    <property type="entry name" value="Snake_toxin-like_sf"/>
</dbReference>
<dbReference type="InterPro" id="IPR018354">
    <property type="entry name" value="Snake_toxin_con_site"/>
</dbReference>
<dbReference type="InterPro" id="IPR054131">
    <property type="entry name" value="Toxin_cobra-type"/>
</dbReference>
<dbReference type="Pfam" id="PF21947">
    <property type="entry name" value="Toxin_cobra-type"/>
    <property type="match status" value="1"/>
</dbReference>
<dbReference type="SUPFAM" id="SSF57302">
    <property type="entry name" value="Snake toxin-like"/>
    <property type="match status" value="1"/>
</dbReference>
<dbReference type="PROSITE" id="PS00272">
    <property type="entry name" value="SNAKE_TOXIN"/>
    <property type="match status" value="1"/>
</dbReference>